<protein>
    <recommendedName>
        <fullName>(-)-isopiperitenone reductase</fullName>
        <ecNumber>1.3.1.82</ecNumber>
    </recommendedName>
</protein>
<evidence type="ECO:0000250" key="1"/>
<evidence type="ECO:0000269" key="2">
    <source>
    </source>
</evidence>
<evidence type="ECO:0000305" key="3"/>
<evidence type="ECO:0007829" key="4">
    <source>
        <dbReference type="PDB" id="5LDG"/>
    </source>
</evidence>
<reference key="1">
    <citation type="journal article" date="2003" name="Arch. Biochem. Biophys.">
        <title>Monoterpene double-bond reductases of the (-)-menthol biosynthetic pathway: isolation and characterization of cDNAs encoding (-)-isopiperitenone reductase and (+)-pulegone reductase of peppermint.</title>
        <authorList>
            <person name="Ringer K.L."/>
            <person name="McConkey M.E."/>
            <person name="Davis E.M."/>
            <person name="Rushing G.W."/>
            <person name="Croteau R."/>
        </authorList>
    </citation>
    <scope>NUCLEOTIDE SEQUENCE [MRNA]</scope>
    <scope>CATALYTIC ACTIVITY</scope>
    <scope>BIOPHYSICOCHEMICAL PROPERTIES</scope>
    <source>
        <strain>cv. Black Mitcham</strain>
        <tissue>Peltate glandular trichome</tissue>
    </source>
</reference>
<reference key="2">
    <citation type="submission" date="2007-08" db="EMBL/GenBank/DDBJ databases">
        <title>Isolation of full-length genes of menthol biosynthesis pathway from Mentha x piperita cv. Madhuras.</title>
        <authorList>
            <person name="Gupta M.K."/>
            <person name="Gupta S."/>
            <person name="Shasany A.K."/>
            <person name="Khanuja S.P.S."/>
        </authorList>
    </citation>
    <scope>NUCLEOTIDE SEQUENCE [MRNA]</scope>
</reference>
<sequence>MAEVQRYALVTGANKGIGFEICRQLAEKGIIVILTSRNEKRGLEARQKLLKELNVSENRLVFHQLDVTDLASVAAVAVFIKSKFGKLDILVNNAGVSGVEMVGDVSVFNEYIEADFKALQALEAGAKEEPPFKPKANGEMIEKFEGAKDCVVTNYYGPKRLTQALIPLLQLSPSPRIVNVSSSFGSLLLLWNEWAKGVLGDEDRLTEERVDEVVEVFLKDIKEGKLEESQWPPHFAAERVSKAALNAYTKIAAKKYPSFRINAICPGYAKTDITFHAGPLSVAEAAQVPVKLALLPDGGPSGCFFPRDKALALY</sequence>
<organism>
    <name type="scientific">Mentha piperita</name>
    <name type="common">Peppermint</name>
    <name type="synonym">Mentha aquatica x Mentha spicata</name>
    <dbReference type="NCBI Taxonomy" id="34256"/>
    <lineage>
        <taxon>Eukaryota</taxon>
        <taxon>Viridiplantae</taxon>
        <taxon>Streptophyta</taxon>
        <taxon>Embryophyta</taxon>
        <taxon>Tracheophyta</taxon>
        <taxon>Spermatophyta</taxon>
        <taxon>Magnoliopsida</taxon>
        <taxon>eudicotyledons</taxon>
        <taxon>Gunneridae</taxon>
        <taxon>Pentapetalae</taxon>
        <taxon>asterids</taxon>
        <taxon>lamiids</taxon>
        <taxon>Lamiales</taxon>
        <taxon>Lamiaceae</taxon>
        <taxon>Nepetoideae</taxon>
        <taxon>Mentheae</taxon>
        <taxon>Menthinae</taxon>
        <taxon>Mentha</taxon>
    </lineage>
</organism>
<dbReference type="EC" id="1.3.1.82"/>
<dbReference type="EMBL" id="AY300162">
    <property type="protein sequence ID" value="AAQ75422.1"/>
    <property type="molecule type" value="mRNA"/>
</dbReference>
<dbReference type="EMBL" id="EU108700">
    <property type="protein sequence ID" value="ABW86884.1"/>
    <property type="molecule type" value="mRNA"/>
</dbReference>
<dbReference type="PDB" id="5L4S">
    <property type="method" value="X-ray"/>
    <property type="resolution" value="1.41 A"/>
    <property type="chains" value="A=1-314"/>
</dbReference>
<dbReference type="PDB" id="5LCX">
    <property type="method" value="X-ray"/>
    <property type="resolution" value="1.71 A"/>
    <property type="chains" value="A=1-314"/>
</dbReference>
<dbReference type="PDB" id="5LDG">
    <property type="method" value="X-ray"/>
    <property type="resolution" value="1.30 A"/>
    <property type="chains" value="A=1-314"/>
</dbReference>
<dbReference type="PDBsum" id="5L4S"/>
<dbReference type="PDBsum" id="5LCX"/>
<dbReference type="PDBsum" id="5LDG"/>
<dbReference type="SMR" id="Q6WAU1"/>
<dbReference type="KEGG" id="ag:AAQ75422"/>
<dbReference type="BioCyc" id="MetaCyc:MONOMER-6684"/>
<dbReference type="BRENDA" id="1.3.1.82">
    <property type="organism ID" value="3222"/>
</dbReference>
<dbReference type="UniPathway" id="UPA00213"/>
<dbReference type="GO" id="GO:0005737">
    <property type="term" value="C:cytoplasm"/>
    <property type="evidence" value="ECO:0007669"/>
    <property type="project" value="UniProtKB-SubCell"/>
</dbReference>
<dbReference type="GO" id="GO:0016020">
    <property type="term" value="C:membrane"/>
    <property type="evidence" value="ECO:0007669"/>
    <property type="project" value="TreeGrafter"/>
</dbReference>
<dbReference type="GO" id="GO:0052581">
    <property type="term" value="F:(-)-isopiperitenone reductase activity"/>
    <property type="evidence" value="ECO:0000314"/>
    <property type="project" value="UniProtKB"/>
</dbReference>
<dbReference type="GO" id="GO:0070402">
    <property type="term" value="F:NADPH binding"/>
    <property type="evidence" value="ECO:0000314"/>
    <property type="project" value="UniProtKB"/>
</dbReference>
<dbReference type="GO" id="GO:0031525">
    <property type="term" value="P:menthol biosynthetic process"/>
    <property type="evidence" value="ECO:0000314"/>
    <property type="project" value="UniProtKB"/>
</dbReference>
<dbReference type="GO" id="GO:0042214">
    <property type="term" value="P:terpene metabolic process"/>
    <property type="evidence" value="ECO:0000314"/>
    <property type="project" value="UniProtKB"/>
</dbReference>
<dbReference type="Gene3D" id="3.40.50.720">
    <property type="entry name" value="NAD(P)-binding Rossmann-like Domain"/>
    <property type="match status" value="1"/>
</dbReference>
<dbReference type="InterPro" id="IPR036291">
    <property type="entry name" value="NAD(P)-bd_dom_sf"/>
</dbReference>
<dbReference type="InterPro" id="IPR002347">
    <property type="entry name" value="SDR_fam"/>
</dbReference>
<dbReference type="PANTHER" id="PTHR43490">
    <property type="entry name" value="(+)-NEOMENTHOL DEHYDROGENASE"/>
    <property type="match status" value="1"/>
</dbReference>
<dbReference type="PANTHER" id="PTHR43490:SF98">
    <property type="entry name" value="OS02G0640600 PROTEIN"/>
    <property type="match status" value="1"/>
</dbReference>
<dbReference type="Pfam" id="PF00106">
    <property type="entry name" value="adh_short"/>
    <property type="match status" value="1"/>
</dbReference>
<dbReference type="PRINTS" id="PR00081">
    <property type="entry name" value="GDHRDH"/>
</dbReference>
<dbReference type="PRINTS" id="PR00080">
    <property type="entry name" value="SDRFAMILY"/>
</dbReference>
<dbReference type="SUPFAM" id="SSF51735">
    <property type="entry name" value="NAD(P)-binding Rossmann-fold domains"/>
    <property type="match status" value="1"/>
</dbReference>
<name>IPIPR_MENPI</name>
<feature type="chain" id="PRO_0000398336" description="(-)-isopiperitenone reductase">
    <location>
        <begin position="1"/>
        <end position="314"/>
    </location>
</feature>
<feature type="binding site" evidence="1">
    <location>
        <begin position="10"/>
        <end position="33"/>
    </location>
    <ligand>
        <name>NADP(+)</name>
        <dbReference type="ChEBI" id="CHEBI:58349"/>
    </ligand>
</feature>
<feature type="binding site" evidence="1">
    <location>
        <position position="182"/>
    </location>
    <ligand>
        <name>substrate</name>
    </ligand>
</feature>
<feature type="sequence conflict" description="In Ref. 2; ABW86884." evidence="3" ref="2">
    <original>I</original>
    <variation>V</variation>
    <location>
        <position position="17"/>
    </location>
</feature>
<feature type="strand" evidence="4">
    <location>
        <begin position="7"/>
        <end position="12"/>
    </location>
</feature>
<feature type="helix" evidence="4">
    <location>
        <begin position="16"/>
        <end position="27"/>
    </location>
</feature>
<feature type="strand" evidence="4">
    <location>
        <begin position="31"/>
        <end position="38"/>
    </location>
</feature>
<feature type="helix" evidence="4">
    <location>
        <begin position="39"/>
        <end position="53"/>
    </location>
</feature>
<feature type="helix" evidence="4">
    <location>
        <begin position="57"/>
        <end position="59"/>
    </location>
</feature>
<feature type="strand" evidence="4">
    <location>
        <begin position="60"/>
        <end position="64"/>
    </location>
</feature>
<feature type="helix" evidence="4">
    <location>
        <begin position="70"/>
        <end position="83"/>
    </location>
</feature>
<feature type="strand" evidence="4">
    <location>
        <begin position="88"/>
        <end position="92"/>
    </location>
</feature>
<feature type="strand" evidence="4">
    <location>
        <begin position="100"/>
        <end position="103"/>
    </location>
</feature>
<feature type="helix" evidence="4">
    <location>
        <begin position="107"/>
        <end position="123"/>
    </location>
</feature>
<feature type="strand" evidence="4">
    <location>
        <begin position="135"/>
        <end position="141"/>
    </location>
</feature>
<feature type="helix" evidence="4">
    <location>
        <begin position="144"/>
        <end position="154"/>
    </location>
</feature>
<feature type="helix" evidence="4">
    <location>
        <begin position="156"/>
        <end position="169"/>
    </location>
</feature>
<feature type="strand" evidence="4">
    <location>
        <begin position="172"/>
        <end position="174"/>
    </location>
</feature>
<feature type="strand" evidence="4">
    <location>
        <begin position="176"/>
        <end position="180"/>
    </location>
</feature>
<feature type="helix" evidence="4">
    <location>
        <begin position="183"/>
        <end position="185"/>
    </location>
</feature>
<feature type="helix" evidence="4">
    <location>
        <begin position="187"/>
        <end position="189"/>
    </location>
</feature>
<feature type="helix" evidence="4">
    <location>
        <begin position="193"/>
        <end position="200"/>
    </location>
</feature>
<feature type="helix" evidence="4">
    <location>
        <begin position="202"/>
        <end position="204"/>
    </location>
</feature>
<feature type="helix" evidence="4">
    <location>
        <begin position="207"/>
        <end position="222"/>
    </location>
</feature>
<feature type="turn" evidence="4">
    <location>
        <begin position="226"/>
        <end position="230"/>
    </location>
</feature>
<feature type="strand" evidence="4">
    <location>
        <begin position="233"/>
        <end position="235"/>
    </location>
</feature>
<feature type="helix" evidence="4">
    <location>
        <begin position="236"/>
        <end position="255"/>
    </location>
</feature>
<feature type="strand" evidence="4">
    <location>
        <begin position="259"/>
        <end position="264"/>
    </location>
</feature>
<feature type="helix" evidence="4">
    <location>
        <begin position="272"/>
        <end position="274"/>
    </location>
</feature>
<feature type="strand" evidence="4">
    <location>
        <begin position="278"/>
        <end position="280"/>
    </location>
</feature>
<feature type="helix" evidence="4">
    <location>
        <begin position="282"/>
        <end position="293"/>
    </location>
</feature>
<feature type="helix" evidence="4">
    <location>
        <begin position="307"/>
        <end position="311"/>
    </location>
</feature>
<comment type="function">
    <text>Monoterpene synthase that catalyzes the specific reduction of the 1(2)-double bond of (-)-isopiperitenone to produce (+)-cis-isopulegone. Does not catalyze the reverse reaction. Unable to reduce (+)-pulegone, (+)-cis-isopulegone, (-)-menthone or the 1,2-double bond of (-)-carvone. Able to utilize NADH with 20% the efficiency of NADPH.</text>
</comment>
<comment type="catalytic activity">
    <reaction evidence="2">
        <text>(2R,5R)-isopulegone + NADP(+) = (6R)-isopiperitenone + NADPH + H(+)</text>
        <dbReference type="Rhea" id="RHEA:25649"/>
        <dbReference type="ChEBI" id="CHEBI:15378"/>
        <dbReference type="ChEBI" id="CHEBI:15408"/>
        <dbReference type="ChEBI" id="CHEBI:37047"/>
        <dbReference type="ChEBI" id="CHEBI:57783"/>
        <dbReference type="ChEBI" id="CHEBI:58349"/>
        <dbReference type="EC" id="1.3.1.82"/>
    </reaction>
</comment>
<comment type="biophysicochemical properties">
    <kinetics>
        <KM evidence="2">1 uM for (-)-isopiperitenone</KM>
        <KM evidence="2">2.2 uM for NADPH</KM>
    </kinetics>
    <phDependence>
        <text evidence="2">Optimum pH is 5.5.</text>
    </phDependence>
</comment>
<comment type="pathway">
    <text>Secondary metabolite biosynthesis; terpenoid biosynthesis.</text>
</comment>
<comment type="subcellular location">
    <subcellularLocation>
        <location evidence="3">Cytoplasm</location>
    </subcellularLocation>
</comment>
<comment type="similarity">
    <text evidence="3">Belongs to the short-chain dehydrogenases/reductases (SDR) family.</text>
</comment>
<accession>Q6WAU1</accession>
<accession>B0F4G7</accession>
<keyword id="KW-0002">3D-structure</keyword>
<keyword id="KW-0963">Cytoplasm</keyword>
<keyword id="KW-0521">NADP</keyword>
<keyword id="KW-0560">Oxidoreductase</keyword>
<proteinExistence type="evidence at protein level"/>